<comment type="function">
    <text evidence="2 3 4 5">Plasmanylethanolamine desaturase involved in plasmalogen biogenesis in the membrane, required for light-induced carotenogenesis (PubMed:12519205, PubMed:18310035, PubMed:22267513, PubMed:31604315). Plasmalogens are glycerophospholipids with a hydrocarbon chain linked by a vinyl ether bond at the glycerol sn-1 position, and are involved in antioxidative and signaling mechanisms, most precisely in sensing photooxidative stress through singlet oxygen (PubMed:31604315). Participates in the light-dependent inactivation of the antisigma factor CarR (PubMed:12519205, PubMed:18310035). Mediates signaling by singlet oxygen, generated via photoexcited protoporphyrin IX (PubMed:22267513).</text>
</comment>
<comment type="catalytic activity">
    <reaction evidence="5">
        <text>a 1-(1,2-saturated alkyl)-2-acyl-sn-glycero-3-phosphoethanolamine + 2 Fe(II)-[cytochrome b5] + O2 + 2 H(+) = a 1-O-(1Z-alkenyl)-2-acyl-sn-glycero-3-phosphoethanolamine + 2 Fe(III)-[cytochrome b5] + 2 H2O</text>
        <dbReference type="Rhea" id="RHEA:22956"/>
        <dbReference type="Rhea" id="RHEA-COMP:10438"/>
        <dbReference type="Rhea" id="RHEA-COMP:10439"/>
        <dbReference type="ChEBI" id="CHEBI:15377"/>
        <dbReference type="ChEBI" id="CHEBI:15378"/>
        <dbReference type="ChEBI" id="CHEBI:15379"/>
        <dbReference type="ChEBI" id="CHEBI:29033"/>
        <dbReference type="ChEBI" id="CHEBI:29034"/>
        <dbReference type="ChEBI" id="CHEBI:75028"/>
        <dbReference type="ChEBI" id="CHEBI:77290"/>
        <dbReference type="EC" id="1.14.19.77"/>
    </reaction>
    <physiologicalReaction direction="left-to-right" evidence="5">
        <dbReference type="Rhea" id="RHEA:22957"/>
    </physiologicalReaction>
</comment>
<comment type="catalytic activity">
    <reaction evidence="5">
        <text>1-O-(13-methyltetradecyl)-2-(13-methyltetradecanoyl)-sn-glycero-3-phosphoethanolamine + 2 Fe(II)-[cytochrome b5] + O2 + 2 H(+) = 1-O-(1Z-13-methyltetradecenyl)-2-(13-methyltetradecanoyl)-sn-glycero-3-phosphoethanolamine + 2 Fe(III)-[cytochrome b5] + 2 H2O</text>
        <dbReference type="Rhea" id="RHEA:61972"/>
        <dbReference type="Rhea" id="RHEA-COMP:10438"/>
        <dbReference type="Rhea" id="RHEA-COMP:10439"/>
        <dbReference type="ChEBI" id="CHEBI:15377"/>
        <dbReference type="ChEBI" id="CHEBI:15378"/>
        <dbReference type="ChEBI" id="CHEBI:15379"/>
        <dbReference type="ChEBI" id="CHEBI:29033"/>
        <dbReference type="ChEBI" id="CHEBI:29034"/>
        <dbReference type="ChEBI" id="CHEBI:145179"/>
        <dbReference type="ChEBI" id="CHEBI:145180"/>
    </reaction>
    <physiologicalReaction direction="left-to-right" evidence="5">
        <dbReference type="Rhea" id="RHEA:61973"/>
    </physiologicalReaction>
</comment>
<comment type="subunit">
    <text evidence="3">Interacts with CarR.</text>
</comment>
<comment type="subcellular location">
    <subcellularLocation>
        <location evidence="9">Cell inner membrane</location>
        <topology evidence="1">Multi-pass membrane protein</topology>
    </subcellularLocation>
</comment>
<comment type="domain">
    <text evidence="2 3 4 5">Histidine box-1 and -2 together with other histidine residues are essential for catalytic activity.</text>
</comment>
<comment type="disruption phenotype">
    <text evidence="2">Deletion prevents the activation of the light inducible promoters of carQ, crtI and carB.</text>
</comment>
<comment type="similarity">
    <text evidence="8">Belongs to the fatty acid desaturase CarF family.</text>
</comment>
<gene>
    <name evidence="6" type="primary">carF</name>
</gene>
<dbReference type="EC" id="1.14.19.77" evidence="5"/>
<dbReference type="EMBL" id="AY204462">
    <property type="protein sequence ID" value="AAO22861.1"/>
    <property type="molecule type" value="Genomic_DNA"/>
</dbReference>
<dbReference type="EMBL" id="AJ311657">
    <property type="protein sequence ID" value="CAC34626.1"/>
    <property type="molecule type" value="Genomic_DNA"/>
</dbReference>
<dbReference type="RefSeq" id="WP_011555701.1">
    <property type="nucleotide sequence ID" value="NZ_JABFNQ010000107.1"/>
</dbReference>
<dbReference type="SwissLipids" id="SLP:000001974"/>
<dbReference type="GeneID" id="41362993"/>
<dbReference type="OMA" id="KFVWTCY"/>
<dbReference type="BioCyc" id="MetaCyc:MONOMER-21879"/>
<dbReference type="BRENDA" id="1.14.19.77">
    <property type="organism ID" value="3551"/>
</dbReference>
<dbReference type="GO" id="GO:0005886">
    <property type="term" value="C:plasma membrane"/>
    <property type="evidence" value="ECO:0007669"/>
    <property type="project" value="UniProtKB-SubCell"/>
</dbReference>
<dbReference type="GO" id="GO:0050207">
    <property type="term" value="F:plasmanylethanolamine desaturase activity"/>
    <property type="evidence" value="ECO:0000314"/>
    <property type="project" value="UniProtKB"/>
</dbReference>
<dbReference type="GO" id="GO:0008611">
    <property type="term" value="P:ether lipid biosynthetic process"/>
    <property type="evidence" value="ECO:0000314"/>
    <property type="project" value="UniProtKB"/>
</dbReference>
<dbReference type="InterPro" id="IPR019547">
    <property type="entry name" value="Lipid_desat"/>
</dbReference>
<dbReference type="InterPro" id="IPR052601">
    <property type="entry name" value="Plasmalogen_desaturase"/>
</dbReference>
<dbReference type="NCBIfam" id="NF045946">
    <property type="entry name" value="PlasmethDesatCarF"/>
    <property type="match status" value="1"/>
</dbReference>
<dbReference type="PANTHER" id="PTHR48177:SF1">
    <property type="entry name" value="PLASMANYLETHANOLAMINE DESATURASE 1"/>
    <property type="match status" value="1"/>
</dbReference>
<dbReference type="PANTHER" id="PTHR48177">
    <property type="entry name" value="TRANSMEMBRANE PROTEIN 189"/>
    <property type="match status" value="1"/>
</dbReference>
<dbReference type="Pfam" id="PF10520">
    <property type="entry name" value="Lipid_desat"/>
    <property type="match status" value="1"/>
</dbReference>
<proteinExistence type="evidence at protein level"/>
<name>CARF_MYXXA</name>
<keyword id="KW-0997">Cell inner membrane</keyword>
<keyword id="KW-1003">Cell membrane</keyword>
<keyword id="KW-0472">Membrane</keyword>
<keyword id="KW-0560">Oxidoreductase</keyword>
<keyword id="KW-0812">Transmembrane</keyword>
<keyword id="KW-1133">Transmembrane helix</keyword>
<organism>
    <name type="scientific">Myxococcus xanthus</name>
    <dbReference type="NCBI Taxonomy" id="34"/>
    <lineage>
        <taxon>Bacteria</taxon>
        <taxon>Pseudomonadati</taxon>
        <taxon>Myxococcota</taxon>
        <taxon>Myxococcia</taxon>
        <taxon>Myxococcales</taxon>
        <taxon>Cystobacterineae</taxon>
        <taxon>Myxococcaceae</taxon>
        <taxon>Myxococcus</taxon>
    </lineage>
</organism>
<sequence>MKTQEIEKKVRQQDAQVLAQGYSPAIRAMEIAAIVSFVSLEVALVYRLWGTPYAGTWLLLSAVLLGYLAADFVSGFVHWMGDTWGSTEMPVLGKALIRPFREHHVDEKAITRHDFVETNGNNCLISLPVAIIALCLPMSGPGWVFCASFLGAMIFWVMATNQFHKWSHMDSPPALVGFLQRVHLILPPDHHRIHHTKPYNKYYCITVGWMNKPLTMVHFFPTAERLITWATGLLPRQDDIGAEAARALVVAAGGSEAPVVQAAKELLTQATVQEKPASTRP</sequence>
<accession>Q9AE87</accession>
<evidence type="ECO:0000255" key="1"/>
<evidence type="ECO:0000269" key="2">
    <source>
    </source>
</evidence>
<evidence type="ECO:0000269" key="3">
    <source>
    </source>
</evidence>
<evidence type="ECO:0000269" key="4">
    <source>
    </source>
</evidence>
<evidence type="ECO:0000269" key="5">
    <source>
    </source>
</evidence>
<evidence type="ECO:0000303" key="6">
    <source>
    </source>
</evidence>
<evidence type="ECO:0000303" key="7">
    <source>
    </source>
</evidence>
<evidence type="ECO:0000305" key="8"/>
<evidence type="ECO:0000305" key="9">
    <source>
    </source>
</evidence>
<reference key="1">
    <citation type="journal article" date="2003" name="Mol. Microbiol.">
        <title>A novel regulatory gene for light-induced carotenoid synthesis in the bacterium Myxococcus xanthus.</title>
        <authorList>
            <person name="Fontes M."/>
            <person name="Galbis-Martinez L."/>
            <person name="Murillo F.J."/>
        </authorList>
    </citation>
    <scope>NUCLEOTIDE SEQUENCE [GENOMIC DNA]</scope>
    <scope>FUNCTION</scope>
    <scope>DISRUPTION PHENOTYPE</scope>
    <scope>DOMAIN</scope>
    <scope>MUTAGENESIS OF HIS-78; HIS-103; HIS-113 AND HIS-218</scope>
    <source>
        <strain>DK1050</strain>
    </source>
</reference>
<reference key="2">
    <citation type="submission" date="2002-12" db="EMBL/GenBank/DDBJ databases">
        <title>Identification of genes required for adventurous gliding motility in Myxococcus xanthus with the transposable element mariner.</title>
        <authorList>
            <person name="Hartzell P.L."/>
            <person name="Youderian P.A."/>
        </authorList>
    </citation>
    <scope>NUCLEOTIDE SEQUENCE [GENOMIC DNA]</scope>
</reference>
<reference key="3">
    <citation type="journal article" date="2008" name="Microbiology">
        <title>An anti-antisigma factor in the response of the bacterium Myxococcus xanthus to blue light.</title>
        <authorList>
            <person name="Galbis-Martinez L."/>
            <person name="Galbis-Martinez M."/>
            <person name="Murillo F.J."/>
            <person name="Fontes M."/>
        </authorList>
    </citation>
    <scope>FUNCTION</scope>
    <scope>SUBCELLULAR LOCATION</scope>
    <scope>INTERACTION WITH CARR</scope>
    <scope>DOMAIN</scope>
    <scope>MUTAGENESIS OF HIS-78; HIS-103; HIS-113; HIS-164; HIS-195 AND HIS-218</scope>
    <scope>TOPOLOGY</scope>
    <source>
        <strain>DK1050</strain>
    </source>
</reference>
<reference key="4">
    <citation type="journal article" date="2012" name="J. Bacteriol.">
        <title>CarF mediates signaling by singlet oxygen, generated via photoexcited protoporphyrin IX, in Myxococcus xanthus light-induced carotenogenesis.</title>
        <authorList>
            <person name="Galbis-Martinez M."/>
            <person name="Padmanabhan S."/>
            <person name="Murillo F.J."/>
            <person name="Elias-Arnanz M."/>
        </authorList>
    </citation>
    <scope>FUNCTION</scope>
    <scope>DOMAIN</scope>
    <source>
        <strain>DK1050</strain>
    </source>
</reference>
<reference key="5">
    <citation type="journal article" date="2019" name="Science">
        <title>A bacterial light response reveals an orphan desaturase for human plasmalogen synthesis.</title>
        <authorList>
            <person name="Gallego-Garcia A."/>
            <person name="Monera-Girona A.J."/>
            <person name="Pajares-Martinez E."/>
            <person name="Bastida-Martinez E."/>
            <person name="Perez-Castano R."/>
            <person name="Iniesta A.A."/>
            <person name="Fontes M."/>
            <person name="Padmanabhan S."/>
            <person name="Elias-Arnanz M."/>
        </authorList>
    </citation>
    <scope>FUNCTION</scope>
    <scope>DOMAIN</scope>
    <scope>MUTAGENESIS OF HIS-78; HIS-103; HIS-104; HIS-113; HIS-164; HIS-168; HIS-183; HIS-190; HIS-191; HIS-194; HIS-195 AND HIS-218</scope>
    <scope>CATALYTIC ACTIVITY</scope>
</reference>
<feature type="chain" id="PRO_0000448849" description="Plasmanylethanolamine desaturase">
    <location>
        <begin position="1"/>
        <end position="281"/>
    </location>
</feature>
<feature type="topological domain" description="Cytoplasmic" evidence="3">
    <location>
        <begin position="1"/>
        <end position="28"/>
    </location>
</feature>
<feature type="transmembrane region" description="Helical" evidence="1">
    <location>
        <begin position="29"/>
        <end position="45"/>
    </location>
</feature>
<feature type="topological domain" description="Periplasmic" evidence="3">
    <location>
        <begin position="46"/>
        <end position="58"/>
    </location>
</feature>
<feature type="transmembrane region" description="Helical" evidence="1">
    <location>
        <begin position="59"/>
        <end position="75"/>
    </location>
</feature>
<feature type="topological domain" description="Cytoplasmic" evidence="3">
    <location>
        <begin position="76"/>
        <end position="123"/>
    </location>
</feature>
<feature type="transmembrane region" description="Helical" evidence="1">
    <location>
        <begin position="124"/>
        <end position="138"/>
    </location>
</feature>
<feature type="topological domain" description="Periplasmic" evidence="3">
    <location>
        <begin position="139"/>
        <end position="142"/>
    </location>
</feature>
<feature type="transmembrane region" description="Helical" evidence="1">
    <location>
        <begin position="143"/>
        <end position="159"/>
    </location>
</feature>
<feature type="topological domain" description="Cytoplasmic" evidence="3">
    <location>
        <begin position="160"/>
        <end position="281"/>
    </location>
</feature>
<feature type="short sequence motif" description="Histidine box-1" evidence="5">
    <location>
        <begin position="164"/>
        <end position="168"/>
    </location>
</feature>
<feature type="short sequence motif" description="Histidine box-2" evidence="5">
    <location>
        <begin position="191"/>
        <end position="195"/>
    </location>
</feature>
<feature type="site" description="Essential for plasmanylethanolamine desaturase activity" evidence="5">
    <location>
        <position position="78"/>
    </location>
</feature>
<feature type="site" description="Essential for plasmanylethanolamine desaturase activity" evidence="5">
    <location>
        <position position="103"/>
    </location>
</feature>
<feature type="site" description="Essential for plasmanylethanolamine desaturase activity" evidence="5">
    <location>
        <position position="104"/>
    </location>
</feature>
<feature type="site" description="Essential for plasmanylethanolamine desaturase activity" evidence="5">
    <location>
        <position position="113"/>
    </location>
</feature>
<feature type="mutagenesis site" description="Impaired carotenoid synthesis caused by loss of plasmanylethanolamine desaturase activity." evidence="2 3 5">
    <original>H</original>
    <variation>A</variation>
    <location>
        <position position="78"/>
    </location>
</feature>
<feature type="mutagenesis site" description="Impaired carotenoid synthesis caused by loss of plasmanylethanolamine desaturase activity." evidence="2 3 5">
    <original>H</original>
    <variation>A</variation>
    <location>
        <position position="103"/>
    </location>
</feature>
<feature type="mutagenesis site" description="Impaired carotenoid synthesis caused by loss of plasmanylethanolamine desaturase activity." evidence="5">
    <original>H</original>
    <variation>A</variation>
    <location>
        <position position="104"/>
    </location>
</feature>
<feature type="mutagenesis site" description="Impaired carotenoid synthesis caused by loss of plasmanylethanolamine desaturase activity." evidence="2 3 5">
    <original>H</original>
    <variation>A</variation>
    <location>
        <position position="113"/>
    </location>
</feature>
<feature type="mutagenesis site" description="Impaired carotenoid synthesis caused by loss of plasmanylethanolamine desaturase activity." evidence="3 5">
    <original>H</original>
    <variation>A</variation>
    <location>
        <position position="164"/>
    </location>
</feature>
<feature type="mutagenesis site" description="Impaired carotenoid synthesis caused by loss of plasmanylethanolamine desaturase activity." evidence="5">
    <original>H</original>
    <variation>A</variation>
    <location>
        <position position="168"/>
    </location>
</feature>
<feature type="mutagenesis site" description="No effect on plasmanylethanolamine desaturase activity." evidence="5">
    <original>H</original>
    <variation>A</variation>
    <location>
        <position position="183"/>
    </location>
</feature>
<feature type="mutagenesis site" description="No effect on plasmanylethanolamine desaturase activity." evidence="5">
    <original>H</original>
    <variation>A</variation>
    <location>
        <position position="190"/>
    </location>
</feature>
<feature type="mutagenesis site" description="Impaired carotenoid synthesis caused by loss of plasmanylethanolamine desaturase activity." evidence="5">
    <original>H</original>
    <variation>A</variation>
    <location>
        <position position="191"/>
    </location>
</feature>
<feature type="mutagenesis site" description="Impaired carotenoid synthesis caused by loss of plasmanylethanolamine desaturase activity." evidence="5">
    <original>H</original>
    <variation>A</variation>
    <location>
        <position position="194"/>
    </location>
</feature>
<feature type="mutagenesis site" description="Impaired carotenoid synthesis caused by loss of plasmanylethanolamine desaturase activity." evidence="3 5">
    <original>H</original>
    <variation>A</variation>
    <location>
        <position position="195"/>
    </location>
</feature>
<feature type="mutagenesis site" description="No effect on plasmanylethanolamine desaturase activity." evidence="2 3 5">
    <original>H</original>
    <variation>A</variation>
    <location>
        <position position="218"/>
    </location>
</feature>
<protein>
    <recommendedName>
        <fullName evidence="7">Plasmanylethanolamine desaturase</fullName>
        <ecNumber evidence="5">1.14.19.77</ecNumber>
    </recommendedName>
    <alternativeName>
        <fullName evidence="6">Carotenogenesis protein CarF</fullName>
        <shortName evidence="6">CarF</shortName>
    </alternativeName>
</protein>